<reference key="1">
    <citation type="journal article" date="2007" name="PLoS ONE">
        <title>Molecular correlates of host specialization in Staphylococcus aureus.</title>
        <authorList>
            <person name="Herron-Olson L."/>
            <person name="Fitzgerald J.R."/>
            <person name="Musser J.M."/>
            <person name="Kapur V."/>
        </authorList>
    </citation>
    <scope>NUCLEOTIDE SEQUENCE [LARGE SCALE GENOMIC DNA]</scope>
    <source>
        <strain>bovine RF122 / ET3-1</strain>
    </source>
</reference>
<organism>
    <name type="scientific">Staphylococcus aureus (strain bovine RF122 / ET3-1)</name>
    <dbReference type="NCBI Taxonomy" id="273036"/>
    <lineage>
        <taxon>Bacteria</taxon>
        <taxon>Bacillati</taxon>
        <taxon>Bacillota</taxon>
        <taxon>Bacilli</taxon>
        <taxon>Bacillales</taxon>
        <taxon>Staphylococcaceae</taxon>
        <taxon>Staphylococcus</taxon>
    </lineage>
</organism>
<evidence type="ECO:0000250" key="1">
    <source>
        <dbReference type="UniProtKB" id="P09373"/>
    </source>
</evidence>
<evidence type="ECO:0000250" key="2">
    <source>
        <dbReference type="UniProtKB" id="Q5HJF4"/>
    </source>
</evidence>
<evidence type="ECO:0000255" key="3">
    <source>
        <dbReference type="PROSITE-ProRule" id="PRU00493"/>
    </source>
</evidence>
<evidence type="ECO:0000255" key="4">
    <source>
        <dbReference type="PROSITE-ProRule" id="PRU00887"/>
    </source>
</evidence>
<evidence type="ECO:0000305" key="5"/>
<sequence length="749" mass="84862">MLETNKNHATAWQGFKNGRWNRHVDVREFIQLNYTLYEGNDSFLAGPTEATSKLWEQVMQLSKEERERGGMWDMDTKVASTITSHDAGYLDKDLETIVGVQTEKPFKRSMQPFGGIRMAKAACEAYGYELDEETEKIFTDYRKTHNQGVFDAYSREMLNCRKAGVITGLPDAYGRGRIIGDYRRVALYGVDFLMEEKMHDFNTMSTEMSEDVIRLREELSEQYRALKELKELGQKYGFDLSRPAENFKEAVQWLYLAYLAAIKEQNGAAMSLGRTSTFLDIYAERDLKAGVITESEVQEIIDHFIMKLRIVKFARTPDYNELFSGDPTWVTESIGGVGIDGRPLVTKNSFRFLHSLDNLGPAPEPNLTVLWSVRLPDNFKTYCAKMSIKTSSIQYENDDIMRESYGDDYGIACCVSAMTIGKQMQFFGARANLAKTLLYAINGGKDEKSGAQVGPNFEGINSEVLEYDEVFKKFDQMMDWLAGVYINSLNVIHYMHDKYSYERIEMALHDTEIVRTMATGIAGLSVAADSLSAIKYAQVKPIRNEEGLVVDFEIEGDFPKYGNNDDRVDDIAVDLVERFMTKLRSHKTYRDSEHTMSVLTITSNVVYGKKTGNTPDGRKAGEPFAPGANPMHGRDQKGALSSLSSVAKIPYDCCKDGISNTFSIVPKSLGKEPEDQNRNLTSMLDGYAMQCGHHLNINVFNRETLIDAMEHPEEYPQLTIRVSGYAVNFIKLTREQQLDVISRTFHESM</sequence>
<comment type="function">
    <text evidence="1">Catalyzes the conversion of pyruvate to formate and acetyl-CoA.</text>
</comment>
<comment type="catalytic activity">
    <reaction evidence="1">
        <text>formate + acetyl-CoA = pyruvate + CoA</text>
        <dbReference type="Rhea" id="RHEA:11844"/>
        <dbReference type="ChEBI" id="CHEBI:15361"/>
        <dbReference type="ChEBI" id="CHEBI:15740"/>
        <dbReference type="ChEBI" id="CHEBI:57287"/>
        <dbReference type="ChEBI" id="CHEBI:57288"/>
        <dbReference type="EC" id="2.3.1.54"/>
    </reaction>
</comment>
<comment type="pathway">
    <text>Fermentation; pyruvate fermentation; formate from pyruvate: step 1/1.</text>
</comment>
<comment type="subunit">
    <text evidence="1">Homodimer.</text>
</comment>
<comment type="subcellular location">
    <subcellularLocation>
        <location evidence="2">Cytoplasm</location>
    </subcellularLocation>
</comment>
<comment type="miscellaneous">
    <text evidence="1">Several mechanisms have been proposed based on complexes formed with substrate analogs. After activation by the glycine radical, the cysteine radical, Cys-414, can abstract hydrogen atoms from the other active site cysteine, Cys-413, and from coenzyme A, and it can also transfer hydrogen atoms to product radicals. The other active site cysteine can attack the central carbonyl of pyruvate and covalently bind the product acetyl group.</text>
</comment>
<comment type="similarity">
    <text evidence="5">Belongs to the glycyl radical enzyme (GRE) family. PFL subfamily.</text>
</comment>
<accession>Q2YV53</accession>
<feature type="chain" id="PRO_0000271721" description="Formate acetyltransferase">
    <location>
        <begin position="1"/>
        <end position="749"/>
    </location>
</feature>
<feature type="domain" description="PFL" evidence="4">
    <location>
        <begin position="3"/>
        <end position="619"/>
    </location>
</feature>
<feature type="domain" description="Glycine radical" evidence="3">
    <location>
        <begin position="626"/>
        <end position="749"/>
    </location>
</feature>
<feature type="active site" description="S-acetylcysteine intermediate" evidence="1">
    <location>
        <position position="413"/>
    </location>
</feature>
<feature type="active site" description="Cysteine radical intermediate" evidence="1">
    <location>
        <position position="414"/>
    </location>
</feature>
<feature type="modified residue" description="Glycine radical" evidence="3">
    <location>
        <position position="724"/>
    </location>
</feature>
<keyword id="KW-0012">Acyltransferase</keyword>
<keyword id="KW-0119">Carbohydrate metabolism</keyword>
<keyword id="KW-0963">Cytoplasm</keyword>
<keyword id="KW-0313">Glucose metabolism</keyword>
<keyword id="KW-0556">Organic radical</keyword>
<keyword id="KW-0808">Transferase</keyword>
<dbReference type="EC" id="2.3.1.54" evidence="1"/>
<dbReference type="EMBL" id="AJ938182">
    <property type="protein sequence ID" value="CAI79852.1"/>
    <property type="molecule type" value="Genomic_DNA"/>
</dbReference>
<dbReference type="RefSeq" id="WP_000894660.1">
    <property type="nucleotide sequence ID" value="NC_007622.1"/>
</dbReference>
<dbReference type="SMR" id="Q2YV53"/>
<dbReference type="KEGG" id="sab:SAB0164"/>
<dbReference type="HOGENOM" id="CLU_023898_0_0_9"/>
<dbReference type="UniPathway" id="UPA00920">
    <property type="reaction ID" value="UER00891"/>
</dbReference>
<dbReference type="GO" id="GO:0005829">
    <property type="term" value="C:cytosol"/>
    <property type="evidence" value="ECO:0007669"/>
    <property type="project" value="TreeGrafter"/>
</dbReference>
<dbReference type="GO" id="GO:0008861">
    <property type="term" value="F:formate C-acetyltransferase activity"/>
    <property type="evidence" value="ECO:0007669"/>
    <property type="project" value="UniProtKB-EC"/>
</dbReference>
<dbReference type="GO" id="GO:0006006">
    <property type="term" value="P:glucose metabolic process"/>
    <property type="evidence" value="ECO:0007669"/>
    <property type="project" value="UniProtKB-KW"/>
</dbReference>
<dbReference type="CDD" id="cd01678">
    <property type="entry name" value="PFL1"/>
    <property type="match status" value="1"/>
</dbReference>
<dbReference type="FunFam" id="3.20.70.20:FF:000003">
    <property type="entry name" value="Formate acetyltransferase"/>
    <property type="match status" value="1"/>
</dbReference>
<dbReference type="Gene3D" id="3.20.70.20">
    <property type="match status" value="1"/>
</dbReference>
<dbReference type="InterPro" id="IPR050244">
    <property type="entry name" value="Auton_GlycylRad_Cofactor"/>
</dbReference>
<dbReference type="InterPro" id="IPR005949">
    <property type="entry name" value="Form_AcTrfase"/>
</dbReference>
<dbReference type="InterPro" id="IPR019777">
    <property type="entry name" value="Form_AcTrfase_GR_CS"/>
</dbReference>
<dbReference type="InterPro" id="IPR001150">
    <property type="entry name" value="Gly_radical"/>
</dbReference>
<dbReference type="InterPro" id="IPR004184">
    <property type="entry name" value="PFL_dom"/>
</dbReference>
<dbReference type="NCBIfam" id="TIGR01255">
    <property type="entry name" value="pyr_form_ly_1"/>
    <property type="match status" value="1"/>
</dbReference>
<dbReference type="PANTHER" id="PTHR30191">
    <property type="entry name" value="FORMATE ACETYLTRANSFERASE"/>
    <property type="match status" value="1"/>
</dbReference>
<dbReference type="PANTHER" id="PTHR30191:SF0">
    <property type="entry name" value="FORMATE ACETYLTRANSFERASE 1"/>
    <property type="match status" value="1"/>
</dbReference>
<dbReference type="Pfam" id="PF01228">
    <property type="entry name" value="Gly_radical"/>
    <property type="match status" value="1"/>
</dbReference>
<dbReference type="Pfam" id="PF02901">
    <property type="entry name" value="PFL-like"/>
    <property type="match status" value="1"/>
</dbReference>
<dbReference type="PIRSF" id="PIRSF000379">
    <property type="entry name" value="For_Ac_trans_1"/>
    <property type="match status" value="1"/>
</dbReference>
<dbReference type="SUPFAM" id="SSF51998">
    <property type="entry name" value="PFL-like glycyl radical enzymes"/>
    <property type="match status" value="1"/>
</dbReference>
<dbReference type="PROSITE" id="PS00850">
    <property type="entry name" value="GLY_RADICAL_1"/>
    <property type="match status" value="1"/>
</dbReference>
<dbReference type="PROSITE" id="PS51149">
    <property type="entry name" value="GLY_RADICAL_2"/>
    <property type="match status" value="1"/>
</dbReference>
<dbReference type="PROSITE" id="PS51554">
    <property type="entry name" value="PFL"/>
    <property type="match status" value="1"/>
</dbReference>
<protein>
    <recommendedName>
        <fullName>Formate acetyltransferase</fullName>
        <ecNumber evidence="1">2.3.1.54</ecNumber>
    </recommendedName>
    <alternativeName>
        <fullName>Pyruvate formate-lyase</fullName>
    </alternativeName>
</protein>
<proteinExistence type="inferred from homology"/>
<name>PFLB_STAAB</name>
<gene>
    <name type="primary">pflB</name>
    <name type="ordered locus">SAB0164</name>
</gene>